<feature type="signal peptide" evidence="1">
    <location>
        <begin position="1"/>
        <end position="19"/>
    </location>
</feature>
<feature type="chain" id="PRO_0000236319" description="Flagellar P-ring protein">
    <location>
        <begin position="20"/>
        <end position="365"/>
    </location>
</feature>
<reference key="1">
    <citation type="journal article" date="2005" name="Nucleic Acids Res.">
        <title>Genome dynamics and diversity of Shigella species, the etiologic agents of bacillary dysentery.</title>
        <authorList>
            <person name="Yang F."/>
            <person name="Yang J."/>
            <person name="Zhang X."/>
            <person name="Chen L."/>
            <person name="Jiang Y."/>
            <person name="Yan Y."/>
            <person name="Tang X."/>
            <person name="Wang J."/>
            <person name="Xiong Z."/>
            <person name="Dong J."/>
            <person name="Xue Y."/>
            <person name="Zhu Y."/>
            <person name="Xu X."/>
            <person name="Sun L."/>
            <person name="Chen S."/>
            <person name="Nie H."/>
            <person name="Peng J."/>
            <person name="Xu J."/>
            <person name="Wang Y."/>
            <person name="Yuan Z."/>
            <person name="Wen Y."/>
            <person name="Yao Z."/>
            <person name="Shen Y."/>
            <person name="Qiang B."/>
            <person name="Hou Y."/>
            <person name="Yu J."/>
            <person name="Jin Q."/>
        </authorList>
    </citation>
    <scope>NUCLEOTIDE SEQUENCE [LARGE SCALE GENOMIC DNA]</scope>
    <source>
        <strain>Sd197</strain>
    </source>
</reference>
<proteinExistence type="inferred from homology"/>
<comment type="function">
    <text evidence="1">Assembles around the rod to form the L-ring and probably protects the motor/basal body from shearing forces during rotation.</text>
</comment>
<comment type="subunit">
    <text evidence="1">The basal body constitutes a major portion of the flagellar organelle and consists of four rings (L,P,S, and M) mounted on a central rod.</text>
</comment>
<comment type="subcellular location">
    <subcellularLocation>
        <location evidence="1">Periplasm</location>
    </subcellularLocation>
    <subcellularLocation>
        <location evidence="1">Bacterial flagellum basal body</location>
    </subcellularLocation>
</comment>
<comment type="similarity">
    <text evidence="1">Belongs to the FlgI family.</text>
</comment>
<accession>Q32EU0</accession>
<organism>
    <name type="scientific">Shigella dysenteriae serotype 1 (strain Sd197)</name>
    <dbReference type="NCBI Taxonomy" id="300267"/>
    <lineage>
        <taxon>Bacteria</taxon>
        <taxon>Pseudomonadati</taxon>
        <taxon>Pseudomonadota</taxon>
        <taxon>Gammaproteobacteria</taxon>
        <taxon>Enterobacterales</taxon>
        <taxon>Enterobacteriaceae</taxon>
        <taxon>Shigella</taxon>
    </lineage>
</organism>
<gene>
    <name evidence="1" type="primary">flgI</name>
    <name type="ordered locus">SDY_2071</name>
</gene>
<sequence length="365" mass="38214">MIKFLSALILLLVTTAAQAERIRDLTSVQGVRQNSLIGYGLVVGLDGTGDQTTQTPFTTQTLNNMLSQLGITVPTGTNMQLKNVAAVMVTASLPPFGRQGQTIDVVVSSMGNAKSLRGGTLLMTPLKGVDSQVYALAQGNILVGGAGASAGGSSVQVNQLNGGRITNGAVIERELPSQFGVGNTLNLQLNDEDFSMAQQIADTINRVRGYGSATVLDARTIQVRVPSGNSSQVRFLADIQNMQVNVTPQDAKVVINSRTGSVVMNREVTLDSCAVAQGNLSVTVNRQANVSQPDTPFGGGQTVVTPQTQIDLRQSGGSLQSVRSSASLNNVVRSLNALGATPMDLMSILQSMQSAGCLRAKLEII</sequence>
<dbReference type="EMBL" id="CP000034">
    <property type="protein sequence ID" value="ABB62165.1"/>
    <property type="molecule type" value="Genomic_DNA"/>
</dbReference>
<dbReference type="RefSeq" id="WP_005022057.1">
    <property type="nucleotide sequence ID" value="NC_007606.1"/>
</dbReference>
<dbReference type="RefSeq" id="YP_403656.1">
    <property type="nucleotide sequence ID" value="NC_007606.1"/>
</dbReference>
<dbReference type="SMR" id="Q32EU0"/>
<dbReference type="STRING" id="300267.SDY_2071"/>
<dbReference type="EnsemblBacteria" id="ABB62165">
    <property type="protein sequence ID" value="ABB62165"/>
    <property type="gene ID" value="SDY_2071"/>
</dbReference>
<dbReference type="KEGG" id="sdy:SDY_2071"/>
<dbReference type="PATRIC" id="fig|300267.13.peg.2487"/>
<dbReference type="HOGENOM" id="CLU_045235_1_0_6"/>
<dbReference type="Proteomes" id="UP000002716">
    <property type="component" value="Chromosome"/>
</dbReference>
<dbReference type="GO" id="GO:0009428">
    <property type="term" value="C:bacterial-type flagellum basal body, distal rod, P ring"/>
    <property type="evidence" value="ECO:0007669"/>
    <property type="project" value="InterPro"/>
</dbReference>
<dbReference type="GO" id="GO:0030288">
    <property type="term" value="C:outer membrane-bounded periplasmic space"/>
    <property type="evidence" value="ECO:0007669"/>
    <property type="project" value="InterPro"/>
</dbReference>
<dbReference type="GO" id="GO:0005198">
    <property type="term" value="F:structural molecule activity"/>
    <property type="evidence" value="ECO:0007669"/>
    <property type="project" value="InterPro"/>
</dbReference>
<dbReference type="GO" id="GO:0071973">
    <property type="term" value="P:bacterial-type flagellum-dependent cell motility"/>
    <property type="evidence" value="ECO:0007669"/>
    <property type="project" value="InterPro"/>
</dbReference>
<dbReference type="HAMAP" id="MF_00416">
    <property type="entry name" value="FlgI"/>
    <property type="match status" value="1"/>
</dbReference>
<dbReference type="InterPro" id="IPR001782">
    <property type="entry name" value="Flag_FlgI"/>
</dbReference>
<dbReference type="NCBIfam" id="NF003676">
    <property type="entry name" value="PRK05303.1"/>
    <property type="match status" value="1"/>
</dbReference>
<dbReference type="PANTHER" id="PTHR30381">
    <property type="entry name" value="FLAGELLAR P-RING PERIPLASMIC PROTEIN FLGI"/>
    <property type="match status" value="1"/>
</dbReference>
<dbReference type="PANTHER" id="PTHR30381:SF0">
    <property type="entry name" value="FLAGELLAR P-RING PROTEIN"/>
    <property type="match status" value="1"/>
</dbReference>
<dbReference type="Pfam" id="PF02119">
    <property type="entry name" value="FlgI"/>
    <property type="match status" value="1"/>
</dbReference>
<dbReference type="PRINTS" id="PR01010">
    <property type="entry name" value="FLGPRINGFLGI"/>
</dbReference>
<protein>
    <recommendedName>
        <fullName evidence="1">Flagellar P-ring protein</fullName>
    </recommendedName>
    <alternativeName>
        <fullName evidence="1">Basal body P-ring protein</fullName>
    </alternativeName>
</protein>
<keyword id="KW-0975">Bacterial flagellum</keyword>
<keyword id="KW-0574">Periplasm</keyword>
<keyword id="KW-1185">Reference proteome</keyword>
<keyword id="KW-0732">Signal</keyword>
<evidence type="ECO:0000255" key="1">
    <source>
        <dbReference type="HAMAP-Rule" id="MF_00416"/>
    </source>
</evidence>
<name>FLGI_SHIDS</name>